<protein>
    <recommendedName>
        <fullName>Glutamate-rich WD repeat-containing protein 1</fullName>
    </recommendedName>
</protein>
<proteinExistence type="inferred from homology"/>
<reference key="1">
    <citation type="journal article" date="2005" name="Nature">
        <title>The genome of the social amoeba Dictyostelium discoideum.</title>
        <authorList>
            <person name="Eichinger L."/>
            <person name="Pachebat J.A."/>
            <person name="Gloeckner G."/>
            <person name="Rajandream M.A."/>
            <person name="Sucgang R."/>
            <person name="Berriman M."/>
            <person name="Song J."/>
            <person name="Olsen R."/>
            <person name="Szafranski K."/>
            <person name="Xu Q."/>
            <person name="Tunggal B."/>
            <person name="Kummerfeld S."/>
            <person name="Madera M."/>
            <person name="Konfortov B.A."/>
            <person name="Rivero F."/>
            <person name="Bankier A.T."/>
            <person name="Lehmann R."/>
            <person name="Hamlin N."/>
            <person name="Davies R."/>
            <person name="Gaudet P."/>
            <person name="Fey P."/>
            <person name="Pilcher K."/>
            <person name="Chen G."/>
            <person name="Saunders D."/>
            <person name="Sodergren E.J."/>
            <person name="Davis P."/>
            <person name="Kerhornou A."/>
            <person name="Nie X."/>
            <person name="Hall N."/>
            <person name="Anjard C."/>
            <person name="Hemphill L."/>
            <person name="Bason N."/>
            <person name="Farbrother P."/>
            <person name="Desany B."/>
            <person name="Just E."/>
            <person name="Morio T."/>
            <person name="Rost R."/>
            <person name="Churcher C.M."/>
            <person name="Cooper J."/>
            <person name="Haydock S."/>
            <person name="van Driessche N."/>
            <person name="Cronin A."/>
            <person name="Goodhead I."/>
            <person name="Muzny D.M."/>
            <person name="Mourier T."/>
            <person name="Pain A."/>
            <person name="Lu M."/>
            <person name="Harper D."/>
            <person name="Lindsay R."/>
            <person name="Hauser H."/>
            <person name="James K.D."/>
            <person name="Quiles M."/>
            <person name="Madan Babu M."/>
            <person name="Saito T."/>
            <person name="Buchrieser C."/>
            <person name="Wardroper A."/>
            <person name="Felder M."/>
            <person name="Thangavelu M."/>
            <person name="Johnson D."/>
            <person name="Knights A."/>
            <person name="Loulseged H."/>
            <person name="Mungall K.L."/>
            <person name="Oliver K."/>
            <person name="Price C."/>
            <person name="Quail M.A."/>
            <person name="Urushihara H."/>
            <person name="Hernandez J."/>
            <person name="Rabbinowitsch E."/>
            <person name="Steffen D."/>
            <person name="Sanders M."/>
            <person name="Ma J."/>
            <person name="Kohara Y."/>
            <person name="Sharp S."/>
            <person name="Simmonds M.N."/>
            <person name="Spiegler S."/>
            <person name="Tivey A."/>
            <person name="Sugano S."/>
            <person name="White B."/>
            <person name="Walker D."/>
            <person name="Woodward J.R."/>
            <person name="Winckler T."/>
            <person name="Tanaka Y."/>
            <person name="Shaulsky G."/>
            <person name="Schleicher M."/>
            <person name="Weinstock G.M."/>
            <person name="Rosenthal A."/>
            <person name="Cox E.C."/>
            <person name="Chisholm R.L."/>
            <person name="Gibbs R.A."/>
            <person name="Loomis W.F."/>
            <person name="Platzer M."/>
            <person name="Kay R.R."/>
            <person name="Williams J.G."/>
            <person name="Dear P.H."/>
            <person name="Noegel A.A."/>
            <person name="Barrell B.G."/>
            <person name="Kuspa A."/>
        </authorList>
    </citation>
    <scope>NUCLEOTIDE SEQUENCE [LARGE SCALE GENOMIC DNA]</scope>
    <source>
        <strain>AX4</strain>
    </source>
</reference>
<gene>
    <name type="primary">grwd1</name>
    <name type="ORF">DDB_G0291566</name>
</gene>
<name>GRWD1_DICDI</name>
<comment type="subcellular location">
    <subcellularLocation>
        <location evidence="1">Nucleus</location>
        <location evidence="1">Nucleolus</location>
    </subcellularLocation>
</comment>
<organism>
    <name type="scientific">Dictyostelium discoideum</name>
    <name type="common">Social amoeba</name>
    <dbReference type="NCBI Taxonomy" id="44689"/>
    <lineage>
        <taxon>Eukaryota</taxon>
        <taxon>Amoebozoa</taxon>
        <taxon>Evosea</taxon>
        <taxon>Eumycetozoa</taxon>
        <taxon>Dictyostelia</taxon>
        <taxon>Dictyosteliales</taxon>
        <taxon>Dictyosteliaceae</taxon>
        <taxon>Dictyostelium</taxon>
    </lineage>
</organism>
<accession>Q54ED4</accession>
<keyword id="KW-0539">Nucleus</keyword>
<keyword id="KW-1185">Reference proteome</keyword>
<keyword id="KW-0677">Repeat</keyword>
<keyword id="KW-0853">WD repeat</keyword>
<feature type="chain" id="PRO_0000328718" description="Glutamate-rich WD repeat-containing protein 1">
    <location>
        <begin position="1"/>
        <end position="482"/>
    </location>
</feature>
<feature type="repeat" description="WD 1">
    <location>
        <begin position="191"/>
        <end position="231"/>
    </location>
</feature>
<feature type="repeat" description="WD 2">
    <location>
        <begin position="294"/>
        <end position="334"/>
    </location>
</feature>
<feature type="repeat" description="WD 3">
    <location>
        <begin position="337"/>
        <end position="377"/>
    </location>
</feature>
<feature type="repeat" description="WD 4">
    <location>
        <begin position="383"/>
        <end position="423"/>
    </location>
</feature>
<feature type="repeat" description="WD 5">
    <location>
        <begin position="446"/>
        <end position="482"/>
    </location>
</feature>
<feature type="region of interest" description="Disordered" evidence="2">
    <location>
        <begin position="1"/>
        <end position="75"/>
    </location>
</feature>
<feature type="region of interest" description="Disordered" evidence="2">
    <location>
        <begin position="148"/>
        <end position="180"/>
    </location>
</feature>
<feature type="compositionally biased region" description="Acidic residues" evidence="2">
    <location>
        <begin position="27"/>
        <end position="63"/>
    </location>
</feature>
<feature type="compositionally biased region" description="Acidic residues" evidence="2">
    <location>
        <begin position="157"/>
        <end position="180"/>
    </location>
</feature>
<evidence type="ECO:0000250" key="1"/>
<evidence type="ECO:0000256" key="2">
    <source>
        <dbReference type="SAM" id="MobiDB-lite"/>
    </source>
</evidence>
<sequence length="482" mass="54567">MSSKKRSFGDIEFGESDEVGGTNVDVNGEDDFENDDEVESFEDDEQSFEEIEEGGEEGGDNDGEDKGPKKVWRAGVDPLEEDEVLDYDSTAYDMMHSMSVEWPCLSFHPIKDELGAQRNKYPHTMYLVAGTQADEAKNNKVIIMKAKQLHKTKHDDEDSDDDEDSDDDEESDDEDDEDKDVDPELQLAFINHNGAVNRIRSMDQQSNIVATWSDNRSVYIWNIANHLKALDNETVAPKQTAPLHTISNHSIEGYALDWSPKIAGRLATGDCNNSIFVTNASESTWKTDTQAFKGHTESVEDIQWSPSEEKVFASCSIDQTVRIWDIRKPKPAITVKAHTADVNVISWSRNVEYLLVSGCDDGSFRVWDLRAFKDNSPVSDFKYHTGPITSIEWNPYEESQVIVSSSDDQVTIWDFSLEEDTEEFTNANANPDDDFQYPPQLFFIHQGQHDIKEVHWHPQIPHVAISTSIDGFNIFKSSNSEE</sequence>
<dbReference type="EMBL" id="AAFI02000177">
    <property type="protein sequence ID" value="EAL61767.1"/>
    <property type="molecule type" value="Genomic_DNA"/>
</dbReference>
<dbReference type="RefSeq" id="XP_635306.1">
    <property type="nucleotide sequence ID" value="XM_630214.1"/>
</dbReference>
<dbReference type="SMR" id="Q54ED4"/>
<dbReference type="FunCoup" id="Q54ED4">
    <property type="interactions" value="783"/>
</dbReference>
<dbReference type="STRING" id="44689.Q54ED4"/>
<dbReference type="PaxDb" id="44689-DDB0267050"/>
<dbReference type="EnsemblProtists" id="EAL61767">
    <property type="protein sequence ID" value="EAL61767"/>
    <property type="gene ID" value="DDB_G0291566"/>
</dbReference>
<dbReference type="GeneID" id="8628250"/>
<dbReference type="KEGG" id="ddi:DDB_G0291566"/>
<dbReference type="dictyBase" id="DDB_G0291566">
    <property type="gene designation" value="grwd1"/>
</dbReference>
<dbReference type="VEuPathDB" id="AmoebaDB:DDB_G0291566"/>
<dbReference type="eggNOG" id="KOG0302">
    <property type="taxonomic scope" value="Eukaryota"/>
</dbReference>
<dbReference type="HOGENOM" id="CLU_025272_2_1_1"/>
<dbReference type="InParanoid" id="Q54ED4"/>
<dbReference type="OMA" id="RHWKPNA"/>
<dbReference type="PhylomeDB" id="Q54ED4"/>
<dbReference type="PRO" id="PR:Q54ED4"/>
<dbReference type="Proteomes" id="UP000002195">
    <property type="component" value="Chromosome 6"/>
</dbReference>
<dbReference type="GO" id="GO:0005730">
    <property type="term" value="C:nucleolus"/>
    <property type="evidence" value="ECO:0000318"/>
    <property type="project" value="GO_Central"/>
</dbReference>
<dbReference type="GO" id="GO:0042254">
    <property type="term" value="P:ribosome biogenesis"/>
    <property type="evidence" value="ECO:0000318"/>
    <property type="project" value="GO_Central"/>
</dbReference>
<dbReference type="Gene3D" id="2.130.10.10">
    <property type="entry name" value="YVTN repeat-like/Quinoprotein amine dehydrogenase"/>
    <property type="match status" value="1"/>
</dbReference>
<dbReference type="InterPro" id="IPR020472">
    <property type="entry name" value="G-protein_beta_WD-40_rep"/>
</dbReference>
<dbReference type="InterPro" id="IPR051972">
    <property type="entry name" value="Glutamate-rich_WD_repeat"/>
</dbReference>
<dbReference type="InterPro" id="IPR022052">
    <property type="entry name" value="Histone-bd_RBBP4-like_N"/>
</dbReference>
<dbReference type="InterPro" id="IPR015943">
    <property type="entry name" value="WD40/YVTN_repeat-like_dom_sf"/>
</dbReference>
<dbReference type="InterPro" id="IPR036322">
    <property type="entry name" value="WD40_repeat_dom_sf"/>
</dbReference>
<dbReference type="InterPro" id="IPR001680">
    <property type="entry name" value="WD40_rpt"/>
</dbReference>
<dbReference type="PANTHER" id="PTHR45903">
    <property type="entry name" value="GLUTAMATE-RICH WD REPEAT-CONTAINING PROTEIN 1"/>
    <property type="match status" value="1"/>
</dbReference>
<dbReference type="PANTHER" id="PTHR45903:SF1">
    <property type="entry name" value="GLUTAMATE-RICH WD REPEAT-CONTAINING PROTEIN 1"/>
    <property type="match status" value="1"/>
</dbReference>
<dbReference type="Pfam" id="PF12265">
    <property type="entry name" value="CAF1C_H4-bd"/>
    <property type="match status" value="1"/>
</dbReference>
<dbReference type="Pfam" id="PF00400">
    <property type="entry name" value="WD40"/>
    <property type="match status" value="3"/>
</dbReference>
<dbReference type="PRINTS" id="PR00320">
    <property type="entry name" value="GPROTEINBRPT"/>
</dbReference>
<dbReference type="SMART" id="SM00320">
    <property type="entry name" value="WD40"/>
    <property type="match status" value="6"/>
</dbReference>
<dbReference type="SUPFAM" id="SSF50978">
    <property type="entry name" value="WD40 repeat-like"/>
    <property type="match status" value="1"/>
</dbReference>
<dbReference type="PROSITE" id="PS50082">
    <property type="entry name" value="WD_REPEATS_2"/>
    <property type="match status" value="3"/>
</dbReference>
<dbReference type="PROSITE" id="PS50294">
    <property type="entry name" value="WD_REPEATS_REGION"/>
    <property type="match status" value="1"/>
</dbReference>